<proteinExistence type="inferred from homology"/>
<sequence>MNATTAPLPYSAARLHELAHVLIANIRELAHAGWTPATSSNFSHRLDEQHAAITVSGRDKGRLVEEDIMVVDFDGLAVGRPLRPSAETLLHTQLYRRFPEICCVLHTHSPVQTIASRLYAGSDVIRLEGYELLKAFEGNTTHETAVEVPVFANTQDMQVLAAQVDALLDKQSVWGYLIEGHGLYAWGRNMAEARRHLEAFEFLLQCELELLKLRGTRQVVPVPHS</sequence>
<evidence type="ECO:0000255" key="1">
    <source>
        <dbReference type="HAMAP-Rule" id="MF_01677"/>
    </source>
</evidence>
<dbReference type="EC" id="4.2.1.109" evidence="1"/>
<dbReference type="EMBL" id="AE013598">
    <property type="protein sequence ID" value="AAW75393.1"/>
    <property type="molecule type" value="Genomic_DNA"/>
</dbReference>
<dbReference type="SMR" id="Q5H0X8"/>
<dbReference type="STRING" id="291331.XOO2139"/>
<dbReference type="KEGG" id="xoo:XOO2139"/>
<dbReference type="HOGENOM" id="CLU_006033_4_1_6"/>
<dbReference type="UniPathway" id="UPA00904">
    <property type="reaction ID" value="UER00875"/>
</dbReference>
<dbReference type="Proteomes" id="UP000006735">
    <property type="component" value="Chromosome"/>
</dbReference>
<dbReference type="GO" id="GO:0005737">
    <property type="term" value="C:cytoplasm"/>
    <property type="evidence" value="ECO:0007669"/>
    <property type="project" value="InterPro"/>
</dbReference>
<dbReference type="GO" id="GO:0046570">
    <property type="term" value="F:methylthioribulose 1-phosphate dehydratase activity"/>
    <property type="evidence" value="ECO:0007669"/>
    <property type="project" value="UniProtKB-UniRule"/>
</dbReference>
<dbReference type="GO" id="GO:0008270">
    <property type="term" value="F:zinc ion binding"/>
    <property type="evidence" value="ECO:0007669"/>
    <property type="project" value="UniProtKB-UniRule"/>
</dbReference>
<dbReference type="GO" id="GO:0019509">
    <property type="term" value="P:L-methionine salvage from methylthioadenosine"/>
    <property type="evidence" value="ECO:0007669"/>
    <property type="project" value="UniProtKB-UniRule"/>
</dbReference>
<dbReference type="GO" id="GO:0005996">
    <property type="term" value="P:monosaccharide metabolic process"/>
    <property type="evidence" value="ECO:0007669"/>
    <property type="project" value="UniProtKB-ARBA"/>
</dbReference>
<dbReference type="FunFam" id="3.40.225.10:FF:000007">
    <property type="entry name" value="Methylthioribulose-1-phosphate dehydratase"/>
    <property type="match status" value="1"/>
</dbReference>
<dbReference type="Gene3D" id="3.40.225.10">
    <property type="entry name" value="Class II aldolase/adducin N-terminal domain"/>
    <property type="match status" value="1"/>
</dbReference>
<dbReference type="HAMAP" id="MF_01677">
    <property type="entry name" value="Salvage_MtnB"/>
    <property type="match status" value="1"/>
</dbReference>
<dbReference type="InterPro" id="IPR001303">
    <property type="entry name" value="Aldolase_II/adducin_N"/>
</dbReference>
<dbReference type="InterPro" id="IPR036409">
    <property type="entry name" value="Aldolase_II/adducin_N_sf"/>
</dbReference>
<dbReference type="InterPro" id="IPR017714">
    <property type="entry name" value="MethylthioRu-1-P_deHdtase_MtnB"/>
</dbReference>
<dbReference type="NCBIfam" id="NF006672">
    <property type="entry name" value="PRK09220.1"/>
    <property type="match status" value="1"/>
</dbReference>
<dbReference type="NCBIfam" id="TIGR03328">
    <property type="entry name" value="salvage_mtnB"/>
    <property type="match status" value="1"/>
</dbReference>
<dbReference type="PANTHER" id="PTHR10640">
    <property type="entry name" value="METHYLTHIORIBULOSE-1-PHOSPHATE DEHYDRATASE"/>
    <property type="match status" value="1"/>
</dbReference>
<dbReference type="PANTHER" id="PTHR10640:SF7">
    <property type="entry name" value="METHYLTHIORIBULOSE-1-PHOSPHATE DEHYDRATASE"/>
    <property type="match status" value="1"/>
</dbReference>
<dbReference type="Pfam" id="PF00596">
    <property type="entry name" value="Aldolase_II"/>
    <property type="match status" value="1"/>
</dbReference>
<dbReference type="SMART" id="SM01007">
    <property type="entry name" value="Aldolase_II"/>
    <property type="match status" value="1"/>
</dbReference>
<dbReference type="SUPFAM" id="SSF53639">
    <property type="entry name" value="AraD/HMP-PK domain-like"/>
    <property type="match status" value="1"/>
</dbReference>
<comment type="function">
    <text evidence="1">Catalyzes the dehydration of methylthioribulose-1-phosphate (MTRu-1-P) into 2,3-diketo-5-methylthiopentyl-1-phosphate (DK-MTP-1-P).</text>
</comment>
<comment type="catalytic activity">
    <reaction evidence="1">
        <text>5-(methylsulfanyl)-D-ribulose 1-phosphate = 5-methylsulfanyl-2,3-dioxopentyl phosphate + H2O</text>
        <dbReference type="Rhea" id="RHEA:15549"/>
        <dbReference type="ChEBI" id="CHEBI:15377"/>
        <dbReference type="ChEBI" id="CHEBI:58548"/>
        <dbReference type="ChEBI" id="CHEBI:58828"/>
        <dbReference type="EC" id="4.2.1.109"/>
    </reaction>
</comment>
<comment type="cofactor">
    <cofactor evidence="1">
        <name>Zn(2+)</name>
        <dbReference type="ChEBI" id="CHEBI:29105"/>
    </cofactor>
    <text evidence="1">Binds 1 zinc ion per subunit.</text>
</comment>
<comment type="pathway">
    <text evidence="1">Amino-acid biosynthesis; L-methionine biosynthesis via salvage pathway; L-methionine from S-methyl-5-thio-alpha-D-ribose 1-phosphate: step 2/6.</text>
</comment>
<comment type="similarity">
    <text evidence="1">Belongs to the aldolase class II family. MtnB subfamily.</text>
</comment>
<gene>
    <name evidence="1" type="primary">mtnB</name>
    <name type="ordered locus">XOO2139</name>
</gene>
<keyword id="KW-0028">Amino-acid biosynthesis</keyword>
<keyword id="KW-0456">Lyase</keyword>
<keyword id="KW-0479">Metal-binding</keyword>
<keyword id="KW-0486">Methionine biosynthesis</keyword>
<keyword id="KW-1185">Reference proteome</keyword>
<keyword id="KW-0862">Zinc</keyword>
<protein>
    <recommendedName>
        <fullName evidence="1">Methylthioribulose-1-phosphate dehydratase</fullName>
        <shortName evidence="1">MTRu-1-P dehydratase</shortName>
        <ecNumber evidence="1">4.2.1.109</ecNumber>
    </recommendedName>
</protein>
<name>MTNB_XANOR</name>
<reference key="1">
    <citation type="journal article" date="2005" name="Nucleic Acids Res.">
        <title>The genome sequence of Xanthomonas oryzae pathovar oryzae KACC10331, the bacterial blight pathogen of rice.</title>
        <authorList>
            <person name="Lee B.-M."/>
            <person name="Park Y.-J."/>
            <person name="Park D.-S."/>
            <person name="Kang H.-W."/>
            <person name="Kim J.-G."/>
            <person name="Song E.-S."/>
            <person name="Park I.-C."/>
            <person name="Yoon U.-H."/>
            <person name="Hahn J.-H."/>
            <person name="Koo B.-S."/>
            <person name="Lee G.-B."/>
            <person name="Kim H."/>
            <person name="Park H.-S."/>
            <person name="Yoon K.-O."/>
            <person name="Kim J.-H."/>
            <person name="Jung C.-H."/>
            <person name="Koh N.-H."/>
            <person name="Seo J.-S."/>
            <person name="Go S.-J."/>
        </authorList>
    </citation>
    <scope>NUCLEOTIDE SEQUENCE [LARGE SCALE GENOMIC DNA]</scope>
    <source>
        <strain>KACC10331 / KXO85</strain>
    </source>
</reference>
<accession>Q5H0X8</accession>
<feature type="chain" id="PRO_0000357115" description="Methylthioribulose-1-phosphate dehydratase">
    <location>
        <begin position="1"/>
        <end position="225"/>
    </location>
</feature>
<feature type="binding site" evidence="1">
    <location>
        <position position="106"/>
    </location>
    <ligand>
        <name>Zn(2+)</name>
        <dbReference type="ChEBI" id="CHEBI:29105"/>
    </ligand>
</feature>
<feature type="binding site" evidence="1">
    <location>
        <position position="108"/>
    </location>
    <ligand>
        <name>Zn(2+)</name>
        <dbReference type="ChEBI" id="CHEBI:29105"/>
    </ligand>
</feature>
<organism>
    <name type="scientific">Xanthomonas oryzae pv. oryzae (strain KACC10331 / KXO85)</name>
    <dbReference type="NCBI Taxonomy" id="291331"/>
    <lineage>
        <taxon>Bacteria</taxon>
        <taxon>Pseudomonadati</taxon>
        <taxon>Pseudomonadota</taxon>
        <taxon>Gammaproteobacteria</taxon>
        <taxon>Lysobacterales</taxon>
        <taxon>Lysobacteraceae</taxon>
        <taxon>Xanthomonas</taxon>
    </lineage>
</organism>